<organism>
    <name type="scientific">Rhizobium johnstonii (strain DSM 114642 / LMG 32736 / 3841)</name>
    <name type="common">Rhizobium leguminosarum bv. viciae</name>
    <dbReference type="NCBI Taxonomy" id="216596"/>
    <lineage>
        <taxon>Bacteria</taxon>
        <taxon>Pseudomonadati</taxon>
        <taxon>Pseudomonadota</taxon>
        <taxon>Alphaproteobacteria</taxon>
        <taxon>Hyphomicrobiales</taxon>
        <taxon>Rhizobiaceae</taxon>
        <taxon>Rhizobium/Agrobacterium group</taxon>
        <taxon>Rhizobium</taxon>
        <taxon>Rhizobium johnstonii</taxon>
    </lineage>
</organism>
<feature type="chain" id="PRO_0000432493" description="Lipid A 1-phosphatase">
    <location>
        <begin position="1"/>
        <end position="244"/>
    </location>
</feature>
<feature type="transmembrane region" description="Helical; Name=1" evidence="1">
    <location>
        <begin position="28"/>
        <end position="48"/>
    </location>
</feature>
<feature type="transmembrane region" description="Helical; Name=2" evidence="1">
    <location>
        <begin position="60"/>
        <end position="80"/>
    </location>
</feature>
<feature type="transmembrane region" description="Helical; Name=3" evidence="1">
    <location>
        <begin position="98"/>
        <end position="118"/>
    </location>
</feature>
<feature type="transmembrane region" description="Helical; Name=4" evidence="1">
    <location>
        <begin position="154"/>
        <end position="174"/>
    </location>
</feature>
<feature type="transmembrane region" description="Helical; Name=5" evidence="1">
    <location>
        <begin position="178"/>
        <end position="198"/>
    </location>
</feature>
<feature type="transmembrane region" description="Helical; Name=6" evidence="1">
    <location>
        <begin position="201"/>
        <end position="221"/>
    </location>
</feature>
<reference key="1">
    <citation type="journal article" date="2003" name="J. Biol. Chem.">
        <title>Expression cloning and biochemical characterization of a Rhizobium leguminosarum lipid A 1-phosphatase.</title>
        <authorList>
            <person name="Karbarz M.J."/>
            <person name="Kalb S.R."/>
            <person name="Cotter R.J."/>
            <person name="Raetz C.R."/>
        </authorList>
    </citation>
    <scope>NUCLEOTIDE SEQUENCE [GENOMIC DNA]</scope>
    <scope>FUNCTION</scope>
    <scope>SUBSTRATE SPECIFICITY</scope>
    <scope>PATHWAY</scope>
    <scope>SUBCELLULAR LOCATION</scope>
    <scope>EXPRESSION IN E.COLI AND S.MELILOTI 1021</scope>
    <source>
        <strain>DSM 114642 / LMG 32736 / 3841</strain>
    </source>
</reference>
<reference key="2">
    <citation type="journal article" date="2006" name="Genome Biol.">
        <title>The genome of Rhizobium leguminosarum has recognizable core and accessory components.</title>
        <authorList>
            <person name="Young J.P.W."/>
            <person name="Crossman L.C."/>
            <person name="Johnston A.W.B."/>
            <person name="Thomson N.R."/>
            <person name="Ghazoui Z.F."/>
            <person name="Hull K.H."/>
            <person name="Wexler M."/>
            <person name="Curson A.R.J."/>
            <person name="Todd J.D."/>
            <person name="Poole P.S."/>
            <person name="Mauchline T.H."/>
            <person name="East A.K."/>
            <person name="Quail M.A."/>
            <person name="Churcher C."/>
            <person name="Arrowsmith C."/>
            <person name="Cherevach I."/>
            <person name="Chillingworth T."/>
            <person name="Clarke K."/>
            <person name="Cronin A."/>
            <person name="Davis P."/>
            <person name="Fraser A."/>
            <person name="Hance Z."/>
            <person name="Hauser H."/>
            <person name="Jagels K."/>
            <person name="Moule S."/>
            <person name="Mungall K."/>
            <person name="Norbertczak H."/>
            <person name="Rabbinowitsch E."/>
            <person name="Sanders M."/>
            <person name="Simmonds M."/>
            <person name="Whitehead S."/>
            <person name="Parkhill J."/>
        </authorList>
    </citation>
    <scope>NUCLEOTIDE SEQUENCE [LARGE SCALE GENOMIC DNA]</scope>
    <source>
        <strain>DSM 114642 / LMG 32736 / 3841</strain>
    </source>
</reference>
<reference key="3">
    <citation type="journal article" date="2006" name="J. Bacteriol.">
        <title>The pea nodule environment restores the ability of a Rhizobium leguminosarum lipopolysaccharide acpXL mutant to add 27-hydroxyoctacosanoic acid to its lipid A.</title>
        <authorList>
            <person name="Vedam V."/>
            <person name="Kannenberg E."/>
            <person name="Datta A."/>
            <person name="Brown D."/>
            <person name="Haynes-Gann J.G."/>
            <person name="Sherrier D.J."/>
            <person name="Carlson R.W."/>
        </authorList>
    </citation>
    <scope>LIPID A STRUCTURE</scope>
    <source>
        <strain>DSM 114642 / LMG 32736 / 3841</strain>
    </source>
</reference>
<proteinExistence type="inferred from homology"/>
<protein>
    <recommendedName>
        <fullName evidence="4">Lipid A 1-phosphatase</fullName>
        <ecNumber evidence="5">3.1.-.-</ecNumber>
    </recommendedName>
</protein>
<evidence type="ECO:0000255" key="1"/>
<evidence type="ECO:0000269" key="2">
    <source>
    </source>
</evidence>
<evidence type="ECO:0000269" key="3">
    <source>
    </source>
</evidence>
<evidence type="ECO:0000303" key="4">
    <source>
    </source>
</evidence>
<evidence type="ECO:0000305" key="5"/>
<evidence type="ECO:0000305" key="6">
    <source>
    </source>
</evidence>
<dbReference type="EC" id="3.1.-.-" evidence="5"/>
<dbReference type="EMBL" id="AY371492">
    <property type="protein sequence ID" value="AAQ72478.1"/>
    <property type="molecule type" value="Genomic_DNA"/>
</dbReference>
<dbReference type="EMBL" id="AM236080">
    <property type="protein sequence ID" value="CAK10191.1"/>
    <property type="molecule type" value="Genomic_DNA"/>
</dbReference>
<dbReference type="SMR" id="Q1MA49"/>
<dbReference type="EnsemblBacteria" id="CAK10191">
    <property type="protein sequence ID" value="CAK10191"/>
    <property type="gene ID" value="RL4708"/>
</dbReference>
<dbReference type="KEGG" id="rle:RL4708"/>
<dbReference type="eggNOG" id="COG0671">
    <property type="taxonomic scope" value="Bacteria"/>
</dbReference>
<dbReference type="HOGENOM" id="CLU_072573_6_0_5"/>
<dbReference type="UniPathway" id="UPA00973"/>
<dbReference type="Proteomes" id="UP000006575">
    <property type="component" value="Chromosome"/>
</dbReference>
<dbReference type="GO" id="GO:0005886">
    <property type="term" value="C:plasma membrane"/>
    <property type="evidence" value="ECO:0007669"/>
    <property type="project" value="UniProtKB-SubCell"/>
</dbReference>
<dbReference type="GO" id="GO:0016787">
    <property type="term" value="F:hydrolase activity"/>
    <property type="evidence" value="ECO:0007669"/>
    <property type="project" value="UniProtKB-KW"/>
</dbReference>
<dbReference type="GO" id="GO:0009245">
    <property type="term" value="P:lipid A biosynthetic process"/>
    <property type="evidence" value="ECO:0007669"/>
    <property type="project" value="UniProtKB-UniPathway"/>
</dbReference>
<dbReference type="GO" id="GO:0009103">
    <property type="term" value="P:lipopolysaccharide biosynthetic process"/>
    <property type="evidence" value="ECO:0007669"/>
    <property type="project" value="UniProtKB-KW"/>
</dbReference>
<dbReference type="CDD" id="cd03389">
    <property type="entry name" value="PAP2_lipid_A_1_phosphatase"/>
    <property type="match status" value="1"/>
</dbReference>
<dbReference type="Gene3D" id="1.20.144.10">
    <property type="entry name" value="Phosphatidic acid phosphatase type 2/haloperoxidase"/>
    <property type="match status" value="2"/>
</dbReference>
<dbReference type="InterPro" id="IPR036938">
    <property type="entry name" value="P_Acid_Pase_2/haloperoxi_sf"/>
</dbReference>
<dbReference type="InterPro" id="IPR000326">
    <property type="entry name" value="P_Acid_Pase_2/haloperoxidase"/>
</dbReference>
<dbReference type="PANTHER" id="PTHR14969:SF62">
    <property type="entry name" value="DECAPRENYLPHOSPHORYL-5-PHOSPHORIBOSE PHOSPHATASE RV3807C-RELATED"/>
    <property type="match status" value="1"/>
</dbReference>
<dbReference type="PANTHER" id="PTHR14969">
    <property type="entry name" value="SPHINGOSINE-1-PHOSPHATE PHOSPHOHYDROLASE"/>
    <property type="match status" value="1"/>
</dbReference>
<dbReference type="Pfam" id="PF01569">
    <property type="entry name" value="PAP2"/>
    <property type="match status" value="1"/>
</dbReference>
<dbReference type="SMART" id="SM00014">
    <property type="entry name" value="acidPPc"/>
    <property type="match status" value="1"/>
</dbReference>
<dbReference type="SUPFAM" id="SSF48317">
    <property type="entry name" value="Acid phosphatase/Vanadium-dependent haloperoxidase"/>
    <property type="match status" value="1"/>
</dbReference>
<accession>Q1MA49</accession>
<accession>Q6UEE4</accession>
<sequence length="244" mass="26990">MRAFWASLDRRWRRSGVGMPPLRWQACLFVTLNAVILSMLLFDAPIGASKAPAPVKHLGELLTGFGDSAWLIYTSILLFFQGRAGYKLLKTARSKAQALYVSWIGAYLFFTVVFSGLLANLLKRAIGRARPDHFHDYGMFSFAPFSGHSAFESFPSGHSTTVGAFFAAFALLFPRYRVAFIACAIWLGMTRVMVGAHYPSDVIAGLAFGAWFSLLTAIVFARCGLLFKLAPDGWPLAKRLFRTA</sequence>
<comment type="function">
    <text evidence="2">Removes the 1-phosphate group from (tetraacyl) lipid A species, has no requirement for the Kdo(2) moiety of lipid A. Has no 4'-phosphatase activity. Reduces sensitivity of S.meliloti strain 1021 to the cationic antimicrobial peptide (CAMP) polymyxin B.</text>
</comment>
<comment type="pathway">
    <text evidence="6">Bacterial outer membrane biogenesis; LPS lipid A biosynthesis.</text>
</comment>
<comment type="subcellular location">
    <subcellularLocation>
        <location evidence="6">Cell inner membrane</location>
        <topology evidence="1">Multi-pass membrane protein</topology>
    </subcellularLocation>
</comment>
<comment type="miscellaneous">
    <text evidence="3 6">In this strain lipid A lacks phosphate groups, and both tetra- and pentaacylated species exist.</text>
</comment>
<comment type="similarity">
    <text evidence="5">Belongs to the lipid A LpxE 1-phosphatase family.</text>
</comment>
<name>LPXE_RHIJ3</name>
<keyword id="KW-0997">Cell inner membrane</keyword>
<keyword id="KW-1003">Cell membrane</keyword>
<keyword id="KW-0378">Hydrolase</keyword>
<keyword id="KW-0441">Lipid A biosynthesis</keyword>
<keyword id="KW-0444">Lipid biosynthesis</keyword>
<keyword id="KW-0443">Lipid metabolism</keyword>
<keyword id="KW-0448">Lipopolysaccharide biosynthesis</keyword>
<keyword id="KW-0472">Membrane</keyword>
<keyword id="KW-0812">Transmembrane</keyword>
<keyword id="KW-1133">Transmembrane helix</keyword>
<gene>
    <name evidence="4" type="primary">lpxE</name>
    <name type="ordered locus">RL4708</name>
</gene>